<evidence type="ECO:0000250" key="1">
    <source>
        <dbReference type="UniProtKB" id="P42766"/>
    </source>
</evidence>
<evidence type="ECO:0000305" key="2"/>
<organism>
    <name type="scientific">Hippocampus comes</name>
    <name type="common">Tiger tail seahorse</name>
    <dbReference type="NCBI Taxonomy" id="109280"/>
    <lineage>
        <taxon>Eukaryota</taxon>
        <taxon>Metazoa</taxon>
        <taxon>Chordata</taxon>
        <taxon>Craniata</taxon>
        <taxon>Vertebrata</taxon>
        <taxon>Euteleostomi</taxon>
        <taxon>Actinopterygii</taxon>
        <taxon>Neopterygii</taxon>
        <taxon>Teleostei</taxon>
        <taxon>Neoteleostei</taxon>
        <taxon>Acanthomorphata</taxon>
        <taxon>Syngnathiaria</taxon>
        <taxon>Syngnathiformes</taxon>
        <taxon>Syngnathoidei</taxon>
        <taxon>Syngnathidae</taxon>
        <taxon>Hippocampus</taxon>
    </lineage>
</organism>
<protein>
    <recommendedName>
        <fullName evidence="2">Large ribosomal subunit protein uL29</fullName>
    </recommendedName>
    <alternativeName>
        <fullName>60S ribosomal protein L35</fullName>
    </alternativeName>
</protein>
<sequence length="123" mass="14453">MAKIKARDLRGKKKEELLKQLDDLKNELSQLRVAKVTGGAASKLSKIRVVRKSIARVLTVITQTQKENLRKFYKGKKYKPLDLRPKKTRALRRRLNKHEESLRTKKQQRKDLLYSIRKFAVKA</sequence>
<name>RL35_HIPCM</name>
<keyword id="KW-0963">Cytoplasm</keyword>
<keyword id="KW-0687">Ribonucleoprotein</keyword>
<keyword id="KW-0689">Ribosomal protein</keyword>
<accession>Q6UZF7</accession>
<proteinExistence type="evidence at transcript level"/>
<dbReference type="EMBL" id="AY357071">
    <property type="protein sequence ID" value="AAQ63320.1"/>
    <property type="molecule type" value="mRNA"/>
</dbReference>
<dbReference type="SMR" id="Q6UZF7"/>
<dbReference type="STRING" id="109280.ENSHCOP00000000783"/>
<dbReference type="Proteomes" id="UP000264820">
    <property type="component" value="Whole Genome Shotgun Assembly"/>
</dbReference>
<dbReference type="GO" id="GO:0022625">
    <property type="term" value="C:cytosolic large ribosomal subunit"/>
    <property type="evidence" value="ECO:0007669"/>
    <property type="project" value="InterPro"/>
</dbReference>
<dbReference type="GO" id="GO:0003729">
    <property type="term" value="F:mRNA binding"/>
    <property type="evidence" value="ECO:0007669"/>
    <property type="project" value="TreeGrafter"/>
</dbReference>
<dbReference type="GO" id="GO:0003735">
    <property type="term" value="F:structural constituent of ribosome"/>
    <property type="evidence" value="ECO:0007669"/>
    <property type="project" value="InterPro"/>
</dbReference>
<dbReference type="GO" id="GO:0000463">
    <property type="term" value="P:maturation of LSU-rRNA from tricistronic rRNA transcript (SSU-rRNA, 5.8S rRNA, LSU-rRNA)"/>
    <property type="evidence" value="ECO:0007669"/>
    <property type="project" value="InterPro"/>
</dbReference>
<dbReference type="GO" id="GO:0006412">
    <property type="term" value="P:translation"/>
    <property type="evidence" value="ECO:0007669"/>
    <property type="project" value="InterPro"/>
</dbReference>
<dbReference type="CDD" id="cd00427">
    <property type="entry name" value="Ribosomal_L29_HIP"/>
    <property type="match status" value="1"/>
</dbReference>
<dbReference type="FunFam" id="1.10.287.310:FF:000002">
    <property type="entry name" value="60S ribosomal protein L35"/>
    <property type="match status" value="1"/>
</dbReference>
<dbReference type="FunFam" id="6.10.250.3450:FF:000001">
    <property type="entry name" value="60S ribosomal protein L35"/>
    <property type="match status" value="1"/>
</dbReference>
<dbReference type="Gene3D" id="1.10.287.310">
    <property type="match status" value="1"/>
</dbReference>
<dbReference type="Gene3D" id="6.10.250.3450">
    <property type="match status" value="1"/>
</dbReference>
<dbReference type="HAMAP" id="MF_00374">
    <property type="entry name" value="Ribosomal_uL29"/>
    <property type="match status" value="1"/>
</dbReference>
<dbReference type="InterPro" id="IPR001854">
    <property type="entry name" value="Ribosomal_uL29"/>
</dbReference>
<dbReference type="InterPro" id="IPR018254">
    <property type="entry name" value="Ribosomal_uL29_CS"/>
</dbReference>
<dbReference type="InterPro" id="IPR045059">
    <property type="entry name" value="Ribosomal_uL29_euk"/>
</dbReference>
<dbReference type="InterPro" id="IPR036049">
    <property type="entry name" value="Ribosomal_uL29_sf"/>
</dbReference>
<dbReference type="NCBIfam" id="TIGR00012">
    <property type="entry name" value="L29"/>
    <property type="match status" value="1"/>
</dbReference>
<dbReference type="PANTHER" id="PTHR45722">
    <property type="entry name" value="60S RIBOSOMAL PROTEIN L35"/>
    <property type="match status" value="1"/>
</dbReference>
<dbReference type="PANTHER" id="PTHR45722:SF2">
    <property type="entry name" value="LARGE RIBOSOMAL SUBUNIT PROTEIN UL29-RELATED"/>
    <property type="match status" value="1"/>
</dbReference>
<dbReference type="Pfam" id="PF00831">
    <property type="entry name" value="Ribosomal_L29"/>
    <property type="match status" value="1"/>
</dbReference>
<dbReference type="SUPFAM" id="SSF46561">
    <property type="entry name" value="Ribosomal protein L29 (L29p)"/>
    <property type="match status" value="1"/>
</dbReference>
<dbReference type="PROSITE" id="PS00579">
    <property type="entry name" value="RIBOSOMAL_L29"/>
    <property type="match status" value="1"/>
</dbReference>
<gene>
    <name type="primary">rpl35</name>
</gene>
<comment type="function">
    <text evidence="1">Component of the large ribosomal subunit. The ribosome is a large ribonucleoprotein complex responsible for the synthesis of proteins in the cell.</text>
</comment>
<comment type="subunit">
    <text evidence="1">Component of the large ribosomal subunit.</text>
</comment>
<comment type="subcellular location">
    <subcellularLocation>
        <location evidence="1">Cytoplasm</location>
    </subcellularLocation>
</comment>
<comment type="similarity">
    <text evidence="2">Belongs to the universal ribosomal protein uL29 family.</text>
</comment>
<reference key="1">
    <citation type="journal article" date="2005" name="FEBS J.">
        <title>The male seahorse synthesizes and secretes a novel C-type lectin into the brood pouch during early pregnancy.</title>
        <authorList>
            <person name="Melamed P."/>
            <person name="Xue Y."/>
            <person name="Poon J.F."/>
            <person name="Wu Q."/>
            <person name="Xie H."/>
            <person name="Yeo J."/>
            <person name="Foo T.W."/>
            <person name="Chua H.K."/>
        </authorList>
    </citation>
    <scope>NUCLEOTIDE SEQUENCE [MRNA]</scope>
</reference>
<feature type="chain" id="PRO_0000130538" description="Large ribosomal subunit protein uL29">
    <location>
        <begin position="1"/>
        <end position="123"/>
    </location>
</feature>